<proteinExistence type="inferred from homology"/>
<organism>
    <name type="scientific">Oryza sativa subsp. indica</name>
    <name type="common">Rice</name>
    <dbReference type="NCBI Taxonomy" id="39946"/>
    <lineage>
        <taxon>Eukaryota</taxon>
        <taxon>Viridiplantae</taxon>
        <taxon>Streptophyta</taxon>
        <taxon>Embryophyta</taxon>
        <taxon>Tracheophyta</taxon>
        <taxon>Spermatophyta</taxon>
        <taxon>Magnoliopsida</taxon>
        <taxon>Liliopsida</taxon>
        <taxon>Poales</taxon>
        <taxon>Poaceae</taxon>
        <taxon>BOP clade</taxon>
        <taxon>Oryzoideae</taxon>
        <taxon>Oryzeae</taxon>
        <taxon>Oryzinae</taxon>
        <taxon>Oryza</taxon>
        <taxon>Oryza sativa</taxon>
    </lineage>
</organism>
<dbReference type="EMBL" id="CM000130">
    <property type="status" value="NOT_ANNOTATED_CDS"/>
    <property type="molecule type" value="Genomic_DNA"/>
</dbReference>
<dbReference type="SMR" id="A2XZN0"/>
<dbReference type="STRING" id="39946.A2XZN0"/>
<dbReference type="EnsemblPlants" id="OsGoSa_05g0001010.01">
    <property type="protein sequence ID" value="OsGoSa_05g0001010.01"/>
    <property type="gene ID" value="OsGoSa_05g0001010"/>
</dbReference>
<dbReference type="EnsemblPlants" id="OsIR64_05g0001000.01">
    <property type="protein sequence ID" value="OsIR64_05g0001000.01"/>
    <property type="gene ID" value="OsIR64_05g0001000"/>
</dbReference>
<dbReference type="EnsemblPlants" id="OsLaMu_05g0001020.01">
    <property type="protein sequence ID" value="OsLaMu_05g0001020.01"/>
    <property type="gene ID" value="OsLaMu_05g0001020"/>
</dbReference>
<dbReference type="EnsemblPlants" id="OsLiXu_05g0001010.01">
    <property type="protein sequence ID" value="OsLiXu_05g0001010.01"/>
    <property type="gene ID" value="OsLiXu_05g0001010"/>
</dbReference>
<dbReference type="Gramene" id="OsGoSa_05g0001010.01">
    <property type="protein sequence ID" value="OsGoSa_05g0001010.01"/>
    <property type="gene ID" value="OsGoSa_05g0001010"/>
</dbReference>
<dbReference type="Gramene" id="OsIR64_05g0001000.01">
    <property type="protein sequence ID" value="OsIR64_05g0001000.01"/>
    <property type="gene ID" value="OsIR64_05g0001000"/>
</dbReference>
<dbReference type="Gramene" id="OsLaMu_05g0001020.01">
    <property type="protein sequence ID" value="OsLaMu_05g0001020.01"/>
    <property type="gene ID" value="OsLaMu_05g0001020"/>
</dbReference>
<dbReference type="Gramene" id="OsLiXu_05g0001010.01">
    <property type="protein sequence ID" value="OsLiXu_05g0001010.01"/>
    <property type="gene ID" value="OsLiXu_05g0001010"/>
</dbReference>
<dbReference type="OrthoDB" id="10253031at2759"/>
<dbReference type="Proteomes" id="UP000007015">
    <property type="component" value="Chromosome 5"/>
</dbReference>
<dbReference type="GO" id="GO:0000786">
    <property type="term" value="C:nucleosome"/>
    <property type="evidence" value="ECO:0007669"/>
    <property type="project" value="UniProtKB-KW"/>
</dbReference>
<dbReference type="GO" id="GO:0005634">
    <property type="term" value="C:nucleus"/>
    <property type="evidence" value="ECO:0007669"/>
    <property type="project" value="UniProtKB-SubCell"/>
</dbReference>
<dbReference type="GO" id="GO:0003677">
    <property type="term" value="F:DNA binding"/>
    <property type="evidence" value="ECO:0007669"/>
    <property type="project" value="UniProtKB-KW"/>
</dbReference>
<dbReference type="GO" id="GO:0046982">
    <property type="term" value="F:protein heterodimerization activity"/>
    <property type="evidence" value="ECO:0007669"/>
    <property type="project" value="InterPro"/>
</dbReference>
<dbReference type="GO" id="GO:0030527">
    <property type="term" value="F:structural constituent of chromatin"/>
    <property type="evidence" value="ECO:0007669"/>
    <property type="project" value="InterPro"/>
</dbReference>
<dbReference type="CDD" id="cd00074">
    <property type="entry name" value="HFD_H2A"/>
    <property type="match status" value="1"/>
</dbReference>
<dbReference type="FunFam" id="1.10.20.10:FF:000026">
    <property type="entry name" value="Histone H2A"/>
    <property type="match status" value="1"/>
</dbReference>
<dbReference type="Gene3D" id="1.10.20.10">
    <property type="entry name" value="Histone, subunit A"/>
    <property type="match status" value="1"/>
</dbReference>
<dbReference type="InterPro" id="IPR009072">
    <property type="entry name" value="Histone-fold"/>
</dbReference>
<dbReference type="InterPro" id="IPR002119">
    <property type="entry name" value="Histone_H2A"/>
</dbReference>
<dbReference type="InterPro" id="IPR007125">
    <property type="entry name" value="Histone_H2A/H2B/H3"/>
</dbReference>
<dbReference type="InterPro" id="IPR032454">
    <property type="entry name" value="Histone_H2A_C"/>
</dbReference>
<dbReference type="InterPro" id="IPR032458">
    <property type="entry name" value="Histone_H2A_CS"/>
</dbReference>
<dbReference type="PANTHER" id="PTHR23430">
    <property type="entry name" value="HISTONE H2A"/>
    <property type="match status" value="1"/>
</dbReference>
<dbReference type="Pfam" id="PF00125">
    <property type="entry name" value="Histone"/>
    <property type="match status" value="1"/>
</dbReference>
<dbReference type="Pfam" id="PF16211">
    <property type="entry name" value="Histone_H2A_C"/>
    <property type="match status" value="1"/>
</dbReference>
<dbReference type="PRINTS" id="PR00620">
    <property type="entry name" value="HISTONEH2A"/>
</dbReference>
<dbReference type="SMART" id="SM00414">
    <property type="entry name" value="H2A"/>
    <property type="match status" value="1"/>
</dbReference>
<dbReference type="SUPFAM" id="SSF47113">
    <property type="entry name" value="Histone-fold"/>
    <property type="match status" value="1"/>
</dbReference>
<dbReference type="PROSITE" id="PS00046">
    <property type="entry name" value="HISTONE_H2A"/>
    <property type="match status" value="1"/>
</dbReference>
<sequence>MDVGVGGKAAKKAVGRKLGGPKKKPVSRSVKAGLQFPVGRIGRYLKKGRYAQRVGTGAPVYLAAVLEYLAAEVLELAGNAARDNKKNRIIPRHVLLAIRNDEELGKLLAGVTIAHGGVLPNINPVLLPKKTAEKADKPAKASKDKAAKSPKKQARS</sequence>
<name>H2A6_ORYSI</name>
<evidence type="ECO:0000250" key="1"/>
<evidence type="ECO:0000256" key="2">
    <source>
        <dbReference type="SAM" id="MobiDB-lite"/>
    </source>
</evidence>
<evidence type="ECO:0000305" key="3"/>
<accession>A2XZN0</accession>
<keyword id="KW-0158">Chromosome</keyword>
<keyword id="KW-0238">DNA-binding</keyword>
<keyword id="KW-0544">Nucleosome core</keyword>
<keyword id="KW-0539">Nucleus</keyword>
<keyword id="KW-1185">Reference proteome</keyword>
<comment type="function">
    <text>Core component of nucleosome. Nucleosomes wrap and compact DNA into chromatin, limiting DNA accessibility to the cellular machineries which require DNA as a template. Histones thereby play a central role in transcription regulation, DNA repair, DNA replication and chromosomal stability. DNA accessibility is regulated via a complex set of post-translational modifications of histones, also called histone code, and nucleosome remodeling.</text>
</comment>
<comment type="subunit">
    <text>The nucleosome is a histone octamer containing two molecules each of H2A, H2B, H3 and H4 assembled in one H3-H4 heterotetramer and two H2A-H2B heterodimers. The octamer wraps approximately 147 bp of DNA.</text>
</comment>
<comment type="subcellular location">
    <subcellularLocation>
        <location evidence="1">Nucleus</location>
    </subcellularLocation>
    <subcellularLocation>
        <location evidence="1">Chromosome</location>
    </subcellularLocation>
</comment>
<comment type="domain">
    <text>Contains one SPKK motif which may interact with the minor groove of A/T-rich DNA sites. Phosphorylation of this motif may regulate DNA binding. This motif is reiterated in both termini of histone H1 and in the N-terminus of sea urchin histones H2B, but its presence in the C-terminus seems to be unique to plant H2A.</text>
</comment>
<comment type="similarity">
    <text evidence="3">Belongs to the histone H2A family.</text>
</comment>
<protein>
    <recommendedName>
        <fullName>Probable histone H2A.6</fullName>
    </recommendedName>
</protein>
<gene>
    <name type="ORF">OsI_017523</name>
</gene>
<feature type="chain" id="PRO_0000296124" description="Probable histone H2A.6">
    <location>
        <begin position="1"/>
        <end position="156"/>
    </location>
</feature>
<feature type="region of interest" description="Disordered" evidence="2">
    <location>
        <begin position="1"/>
        <end position="26"/>
    </location>
</feature>
<feature type="region of interest" description="Disordered" evidence="2">
    <location>
        <begin position="129"/>
        <end position="156"/>
    </location>
</feature>
<feature type="short sequence motif" description="SPKK motif">
    <location>
        <begin position="149"/>
        <end position="152"/>
    </location>
</feature>
<feature type="compositionally biased region" description="Basic residues" evidence="2">
    <location>
        <begin position="9"/>
        <end position="26"/>
    </location>
</feature>
<feature type="compositionally biased region" description="Basic and acidic residues" evidence="2">
    <location>
        <begin position="130"/>
        <end position="147"/>
    </location>
</feature>
<reference key="1">
    <citation type="journal article" date="2005" name="PLoS Biol.">
        <title>The genomes of Oryza sativa: a history of duplications.</title>
        <authorList>
            <person name="Yu J."/>
            <person name="Wang J."/>
            <person name="Lin W."/>
            <person name="Li S."/>
            <person name="Li H."/>
            <person name="Zhou J."/>
            <person name="Ni P."/>
            <person name="Dong W."/>
            <person name="Hu S."/>
            <person name="Zeng C."/>
            <person name="Zhang J."/>
            <person name="Zhang Y."/>
            <person name="Li R."/>
            <person name="Xu Z."/>
            <person name="Li S."/>
            <person name="Li X."/>
            <person name="Zheng H."/>
            <person name="Cong L."/>
            <person name="Lin L."/>
            <person name="Yin J."/>
            <person name="Geng J."/>
            <person name="Li G."/>
            <person name="Shi J."/>
            <person name="Liu J."/>
            <person name="Lv H."/>
            <person name="Li J."/>
            <person name="Wang J."/>
            <person name="Deng Y."/>
            <person name="Ran L."/>
            <person name="Shi X."/>
            <person name="Wang X."/>
            <person name="Wu Q."/>
            <person name="Li C."/>
            <person name="Ren X."/>
            <person name="Wang J."/>
            <person name="Wang X."/>
            <person name="Li D."/>
            <person name="Liu D."/>
            <person name="Zhang X."/>
            <person name="Ji Z."/>
            <person name="Zhao W."/>
            <person name="Sun Y."/>
            <person name="Zhang Z."/>
            <person name="Bao J."/>
            <person name="Han Y."/>
            <person name="Dong L."/>
            <person name="Ji J."/>
            <person name="Chen P."/>
            <person name="Wu S."/>
            <person name="Liu J."/>
            <person name="Xiao Y."/>
            <person name="Bu D."/>
            <person name="Tan J."/>
            <person name="Yang L."/>
            <person name="Ye C."/>
            <person name="Zhang J."/>
            <person name="Xu J."/>
            <person name="Zhou Y."/>
            <person name="Yu Y."/>
            <person name="Zhang B."/>
            <person name="Zhuang S."/>
            <person name="Wei H."/>
            <person name="Liu B."/>
            <person name="Lei M."/>
            <person name="Yu H."/>
            <person name="Li Y."/>
            <person name="Xu H."/>
            <person name="Wei S."/>
            <person name="He X."/>
            <person name="Fang L."/>
            <person name="Zhang Z."/>
            <person name="Zhang Y."/>
            <person name="Huang X."/>
            <person name="Su Z."/>
            <person name="Tong W."/>
            <person name="Li J."/>
            <person name="Tong Z."/>
            <person name="Li S."/>
            <person name="Ye J."/>
            <person name="Wang L."/>
            <person name="Fang L."/>
            <person name="Lei T."/>
            <person name="Chen C.-S."/>
            <person name="Chen H.-C."/>
            <person name="Xu Z."/>
            <person name="Li H."/>
            <person name="Huang H."/>
            <person name="Zhang F."/>
            <person name="Xu H."/>
            <person name="Li N."/>
            <person name="Zhao C."/>
            <person name="Li S."/>
            <person name="Dong L."/>
            <person name="Huang Y."/>
            <person name="Li L."/>
            <person name="Xi Y."/>
            <person name="Qi Q."/>
            <person name="Li W."/>
            <person name="Zhang B."/>
            <person name="Hu W."/>
            <person name="Zhang Y."/>
            <person name="Tian X."/>
            <person name="Jiao Y."/>
            <person name="Liang X."/>
            <person name="Jin J."/>
            <person name="Gao L."/>
            <person name="Zheng W."/>
            <person name="Hao B."/>
            <person name="Liu S.-M."/>
            <person name="Wang W."/>
            <person name="Yuan L."/>
            <person name="Cao M."/>
            <person name="McDermott J."/>
            <person name="Samudrala R."/>
            <person name="Wang J."/>
            <person name="Wong G.K.-S."/>
            <person name="Yang H."/>
        </authorList>
    </citation>
    <scope>NUCLEOTIDE SEQUENCE [LARGE SCALE GENOMIC DNA]</scope>
    <source>
        <strain>cv. 93-11</strain>
    </source>
</reference>